<protein>
    <recommendedName>
        <fullName evidence="4">Large ribosomal subunit protein mL57</fullName>
    </recommendedName>
    <alternativeName>
        <fullName>54S ribosomal protein L15, mitochondrial</fullName>
    </alternativeName>
</protein>
<sequence>MLTRHCNRLGLQIENKFVFRSSSWNCVRRIGKIACNENKYRYEMTSTEEDIDSFFSRVFGEKNYISDKSLREQIVTHKSYKHGLKRYNEPFVSVGNAVIDVCLLNHYLESGNFSTIPSYKDLVNLRSPARLAEVAKKWNPETATQCILPLKGPNSPSSSSFEKIYSSIVSGLVAVVYFQKGGVEAMNFCKKSIISDLTKDFVRPNTVHNQ</sequence>
<gene>
    <name type="primary">mrp15</name>
    <name type="synonym">mrpl15</name>
    <name type="ORF">SPBC1539.01c</name>
</gene>
<name>RM15_SCHPO</name>
<reference key="1">
    <citation type="journal article" date="2002" name="Nature">
        <title>The genome sequence of Schizosaccharomyces pombe.</title>
        <authorList>
            <person name="Wood V."/>
            <person name="Gwilliam R."/>
            <person name="Rajandream M.A."/>
            <person name="Lyne M.H."/>
            <person name="Lyne R."/>
            <person name="Stewart A."/>
            <person name="Sgouros J.G."/>
            <person name="Peat N."/>
            <person name="Hayles J."/>
            <person name="Baker S.G."/>
            <person name="Basham D."/>
            <person name="Bowman S."/>
            <person name="Brooks K."/>
            <person name="Brown D."/>
            <person name="Brown S."/>
            <person name="Chillingworth T."/>
            <person name="Churcher C.M."/>
            <person name="Collins M."/>
            <person name="Connor R."/>
            <person name="Cronin A."/>
            <person name="Davis P."/>
            <person name="Feltwell T."/>
            <person name="Fraser A."/>
            <person name="Gentles S."/>
            <person name="Goble A."/>
            <person name="Hamlin N."/>
            <person name="Harris D.E."/>
            <person name="Hidalgo J."/>
            <person name="Hodgson G."/>
            <person name="Holroyd S."/>
            <person name="Hornsby T."/>
            <person name="Howarth S."/>
            <person name="Huckle E.J."/>
            <person name="Hunt S."/>
            <person name="Jagels K."/>
            <person name="James K.D."/>
            <person name="Jones L."/>
            <person name="Jones M."/>
            <person name="Leather S."/>
            <person name="McDonald S."/>
            <person name="McLean J."/>
            <person name="Mooney P."/>
            <person name="Moule S."/>
            <person name="Mungall K.L."/>
            <person name="Murphy L.D."/>
            <person name="Niblett D."/>
            <person name="Odell C."/>
            <person name="Oliver K."/>
            <person name="O'Neil S."/>
            <person name="Pearson D."/>
            <person name="Quail M.A."/>
            <person name="Rabbinowitsch E."/>
            <person name="Rutherford K.M."/>
            <person name="Rutter S."/>
            <person name="Saunders D."/>
            <person name="Seeger K."/>
            <person name="Sharp S."/>
            <person name="Skelton J."/>
            <person name="Simmonds M.N."/>
            <person name="Squares R."/>
            <person name="Squares S."/>
            <person name="Stevens K."/>
            <person name="Taylor K."/>
            <person name="Taylor R.G."/>
            <person name="Tivey A."/>
            <person name="Walsh S.V."/>
            <person name="Warren T."/>
            <person name="Whitehead S."/>
            <person name="Woodward J.R."/>
            <person name="Volckaert G."/>
            <person name="Aert R."/>
            <person name="Robben J."/>
            <person name="Grymonprez B."/>
            <person name="Weltjens I."/>
            <person name="Vanstreels E."/>
            <person name="Rieger M."/>
            <person name="Schaefer M."/>
            <person name="Mueller-Auer S."/>
            <person name="Gabel C."/>
            <person name="Fuchs M."/>
            <person name="Duesterhoeft A."/>
            <person name="Fritzc C."/>
            <person name="Holzer E."/>
            <person name="Moestl D."/>
            <person name="Hilbert H."/>
            <person name="Borzym K."/>
            <person name="Langer I."/>
            <person name="Beck A."/>
            <person name="Lehrach H."/>
            <person name="Reinhardt R."/>
            <person name="Pohl T.M."/>
            <person name="Eger P."/>
            <person name="Zimmermann W."/>
            <person name="Wedler H."/>
            <person name="Wambutt R."/>
            <person name="Purnelle B."/>
            <person name="Goffeau A."/>
            <person name="Cadieu E."/>
            <person name="Dreano S."/>
            <person name="Gloux S."/>
            <person name="Lelaure V."/>
            <person name="Mottier S."/>
            <person name="Galibert F."/>
            <person name="Aves S.J."/>
            <person name="Xiang Z."/>
            <person name="Hunt C."/>
            <person name="Moore K."/>
            <person name="Hurst S.M."/>
            <person name="Lucas M."/>
            <person name="Rochet M."/>
            <person name="Gaillardin C."/>
            <person name="Tallada V.A."/>
            <person name="Garzon A."/>
            <person name="Thode G."/>
            <person name="Daga R.R."/>
            <person name="Cruzado L."/>
            <person name="Jimenez J."/>
            <person name="Sanchez M."/>
            <person name="del Rey F."/>
            <person name="Benito J."/>
            <person name="Dominguez A."/>
            <person name="Revuelta J.L."/>
            <person name="Moreno S."/>
            <person name="Armstrong J."/>
            <person name="Forsburg S.L."/>
            <person name="Cerutti L."/>
            <person name="Lowe T."/>
            <person name="McCombie W.R."/>
            <person name="Paulsen I."/>
            <person name="Potashkin J."/>
            <person name="Shpakovski G.V."/>
            <person name="Ussery D."/>
            <person name="Barrell B.G."/>
            <person name="Nurse P."/>
        </authorList>
    </citation>
    <scope>NUCLEOTIDE SEQUENCE [LARGE SCALE GENOMIC DNA]</scope>
    <source>
        <strain>972 / ATCC 24843</strain>
    </source>
</reference>
<reference key="2">
    <citation type="journal article" date="2006" name="Nat. Biotechnol.">
        <title>ORFeome cloning and global analysis of protein localization in the fission yeast Schizosaccharomyces pombe.</title>
        <authorList>
            <person name="Matsuyama A."/>
            <person name="Arai R."/>
            <person name="Yashiroda Y."/>
            <person name="Shirai A."/>
            <person name="Kamata A."/>
            <person name="Sekido S."/>
            <person name="Kobayashi Y."/>
            <person name="Hashimoto A."/>
            <person name="Hamamoto M."/>
            <person name="Hiraoka Y."/>
            <person name="Horinouchi S."/>
            <person name="Yoshida M."/>
        </authorList>
    </citation>
    <scope>SUBCELLULAR LOCATION [LARGE SCALE ANALYSIS]</scope>
</reference>
<proteinExistence type="inferred from homology"/>
<feature type="transit peptide" description="Mitochondrion" evidence="2">
    <location>
        <begin position="1"/>
        <end position="59"/>
    </location>
</feature>
<feature type="chain" id="PRO_0000351439" description="Large ribosomal subunit protein mL57">
    <location>
        <begin position="60"/>
        <end position="210"/>
    </location>
</feature>
<evidence type="ECO:0000250" key="1">
    <source>
        <dbReference type="UniProtKB" id="P36523"/>
    </source>
</evidence>
<evidence type="ECO:0000255" key="2"/>
<evidence type="ECO:0000269" key="3">
    <source>
    </source>
</evidence>
<evidence type="ECO:0000305" key="4"/>
<comment type="function">
    <text evidence="1">Component of the mitochondrial ribosome (mitoribosome), a dedicated translation machinery responsible for the synthesis of mitochondrial genome-encoded proteins, including at least some of the essential transmembrane subunits of the mitochondrial respiratory chain. The mitoribosomes are attached to the mitochondrial inner membrane and translation products are cotranslationally integrated into the membrane.</text>
</comment>
<comment type="subunit">
    <text evidence="1">Component of the mitochondrial large ribosomal subunit (mt-LSU). Mature yeast 74S mitochondrial ribosomes consist of a small (37S) and a large (54S) subunit. The 37S small subunit contains a 15S ribosomal RNA (15S mt-rRNA) and at least 32 different proteins. The 54S large subunit contains a 21S rRNA (21S mt-rRNA) and at least 45 different proteins. mL57 forms a heterodimer with mL44 and stabilizes rRNA expansion segments 1/2 at a membrane-facing protuberance close to the point of attachment of the ribosome to the translocon in the membrane.</text>
</comment>
<comment type="subcellular location">
    <subcellularLocation>
        <location evidence="3">Mitochondrion</location>
    </subcellularLocation>
</comment>
<comment type="similarity">
    <text evidence="4">Belongs to the ribonuclease III family. Mitochondrion-specific ribosomal protein mL57 subfamily.</text>
</comment>
<keyword id="KW-0496">Mitochondrion</keyword>
<keyword id="KW-1185">Reference proteome</keyword>
<keyword id="KW-0687">Ribonucleoprotein</keyword>
<keyword id="KW-0689">Ribosomal protein</keyword>
<keyword id="KW-0809">Transit peptide</keyword>
<dbReference type="EMBL" id="CU329671">
    <property type="protein sequence ID" value="CAB51333.1"/>
    <property type="molecule type" value="Genomic_DNA"/>
</dbReference>
<dbReference type="PIR" id="T39460">
    <property type="entry name" value="T39460"/>
</dbReference>
<dbReference type="RefSeq" id="NP_596815.1">
    <property type="nucleotide sequence ID" value="NM_001023835.2"/>
</dbReference>
<dbReference type="SMR" id="Q9Y7Z7"/>
<dbReference type="BioGRID" id="276473">
    <property type="interactions" value="1"/>
</dbReference>
<dbReference type="ComplexPortal" id="CPX-10323">
    <property type="entry name" value="54S mitochondrial large ribosomal subunit"/>
</dbReference>
<dbReference type="FunCoup" id="Q9Y7Z7">
    <property type="interactions" value="45"/>
</dbReference>
<dbReference type="IntAct" id="Q9Y7Z7">
    <property type="interactions" value="1"/>
</dbReference>
<dbReference type="MINT" id="Q9Y7Z7"/>
<dbReference type="STRING" id="284812.Q9Y7Z7"/>
<dbReference type="PaxDb" id="4896-SPBC1539.01c.1"/>
<dbReference type="EnsemblFungi" id="SPBC1539.01c.1">
    <property type="protein sequence ID" value="SPBC1539.01c.1:pep"/>
    <property type="gene ID" value="SPBC1539.01c"/>
</dbReference>
<dbReference type="GeneID" id="2539929"/>
<dbReference type="KEGG" id="spo:2539929"/>
<dbReference type="PomBase" id="SPBC1539.01c">
    <property type="gene designation" value="mrp15"/>
</dbReference>
<dbReference type="VEuPathDB" id="FungiDB:SPBC1539.01c"/>
<dbReference type="eggNOG" id="ENOG502SCTG">
    <property type="taxonomic scope" value="Eukaryota"/>
</dbReference>
<dbReference type="HOGENOM" id="CLU_1327062_0_0_1"/>
<dbReference type="InParanoid" id="Q9Y7Z7"/>
<dbReference type="OMA" id="SLMNHFL"/>
<dbReference type="PRO" id="PR:Q9Y7Z7"/>
<dbReference type="Proteomes" id="UP000002485">
    <property type="component" value="Chromosome II"/>
</dbReference>
<dbReference type="GO" id="GO:0005762">
    <property type="term" value="C:mitochondrial large ribosomal subunit"/>
    <property type="evidence" value="ECO:0000318"/>
    <property type="project" value="GO_Central"/>
</dbReference>
<dbReference type="GO" id="GO:0005739">
    <property type="term" value="C:mitochondrion"/>
    <property type="evidence" value="ECO:0007005"/>
    <property type="project" value="PomBase"/>
</dbReference>
<dbReference type="GO" id="GO:0004525">
    <property type="term" value="F:ribonuclease III activity"/>
    <property type="evidence" value="ECO:0007669"/>
    <property type="project" value="InterPro"/>
</dbReference>
<dbReference type="GO" id="GO:0003735">
    <property type="term" value="F:structural constituent of ribosome"/>
    <property type="evidence" value="ECO:0000318"/>
    <property type="project" value="GO_Central"/>
</dbReference>
<dbReference type="GO" id="GO:0032543">
    <property type="term" value="P:mitochondrial translation"/>
    <property type="evidence" value="ECO:0000266"/>
    <property type="project" value="PomBase"/>
</dbReference>
<dbReference type="GO" id="GO:0006396">
    <property type="term" value="P:RNA processing"/>
    <property type="evidence" value="ECO:0007669"/>
    <property type="project" value="InterPro"/>
</dbReference>
<dbReference type="Gene3D" id="1.10.1520.10">
    <property type="entry name" value="Ribonuclease III domain"/>
    <property type="match status" value="1"/>
</dbReference>
<dbReference type="InterPro" id="IPR040030">
    <property type="entry name" value="Ribosomal_mL57"/>
</dbReference>
<dbReference type="InterPro" id="IPR000999">
    <property type="entry name" value="RNase_III_dom"/>
</dbReference>
<dbReference type="InterPro" id="IPR036389">
    <property type="entry name" value="RNase_III_sf"/>
</dbReference>
<dbReference type="PANTHER" id="PTHR28160">
    <property type="entry name" value="54S RIBOSOMAL PROTEIN L15, MITOCHONDRIAL"/>
    <property type="match status" value="1"/>
</dbReference>
<dbReference type="PANTHER" id="PTHR28160:SF1">
    <property type="entry name" value="LARGE RIBOSOMAL SUBUNIT PROTEIN ML57"/>
    <property type="match status" value="1"/>
</dbReference>
<dbReference type="Pfam" id="PF14622">
    <property type="entry name" value="Ribonucleas_3_3"/>
    <property type="match status" value="1"/>
</dbReference>
<dbReference type="SUPFAM" id="SSF69065">
    <property type="entry name" value="RNase III domain-like"/>
    <property type="match status" value="1"/>
</dbReference>
<organism>
    <name type="scientific">Schizosaccharomyces pombe (strain 972 / ATCC 24843)</name>
    <name type="common">Fission yeast</name>
    <dbReference type="NCBI Taxonomy" id="284812"/>
    <lineage>
        <taxon>Eukaryota</taxon>
        <taxon>Fungi</taxon>
        <taxon>Dikarya</taxon>
        <taxon>Ascomycota</taxon>
        <taxon>Taphrinomycotina</taxon>
        <taxon>Schizosaccharomycetes</taxon>
        <taxon>Schizosaccharomycetales</taxon>
        <taxon>Schizosaccharomycetaceae</taxon>
        <taxon>Schizosaccharomyces</taxon>
    </lineage>
</organism>
<accession>Q9Y7Z7</accession>